<dbReference type="EC" id="3.1.4.35" evidence="10"/>
<dbReference type="EMBL" id="X62692">
    <property type="protein sequence ID" value="CAA44569.1"/>
    <property type="molecule type" value="Genomic_DNA"/>
</dbReference>
<dbReference type="EMBL" id="X62693">
    <property type="protein sequence ID" value="CAA44569.1"/>
    <property type="status" value="JOINED"/>
    <property type="molecule type" value="Genomic_DNA"/>
</dbReference>
<dbReference type="EMBL" id="X62694">
    <property type="protein sequence ID" value="CAA44569.1"/>
    <property type="status" value="JOINED"/>
    <property type="molecule type" value="Genomic_DNA"/>
</dbReference>
<dbReference type="EMBL" id="X62695">
    <property type="protein sequence ID" value="CAA44569.1"/>
    <property type="status" value="JOINED"/>
    <property type="molecule type" value="Genomic_DNA"/>
</dbReference>
<dbReference type="EMBL" id="X66142">
    <property type="protein sequence ID" value="CAA46932.1"/>
    <property type="molecule type" value="mRNA"/>
</dbReference>
<dbReference type="EMBL" id="S41458">
    <property type="protein sequence ID" value="AAB22690.1"/>
    <property type="molecule type" value="mRNA"/>
</dbReference>
<dbReference type="EMBL" id="BT009794">
    <property type="protein sequence ID" value="AAP88796.1"/>
    <property type="molecule type" value="mRNA"/>
</dbReference>
<dbReference type="EMBL" id="AK316054">
    <property type="protein sequence ID" value="BAH14425.1"/>
    <property type="molecule type" value="mRNA"/>
</dbReference>
<dbReference type="EMBL" id="AC107464">
    <property type="status" value="NOT_ANNOTATED_CDS"/>
    <property type="molecule type" value="Genomic_DNA"/>
</dbReference>
<dbReference type="EMBL" id="BC000249">
    <property type="protein sequence ID" value="AAH00249.1"/>
    <property type="molecule type" value="mRNA"/>
</dbReference>
<dbReference type="EMBL" id="X90587">
    <property type="protein sequence ID" value="CAA62215.1"/>
    <property type="molecule type" value="Genomic_DNA"/>
</dbReference>
<dbReference type="EMBL" id="X90588">
    <property type="protein sequence ID" value="CAA62215.1"/>
    <property type="status" value="JOINED"/>
    <property type="molecule type" value="Genomic_DNA"/>
</dbReference>
<dbReference type="EMBL" id="X90589">
    <property type="protein sequence ID" value="CAA62215.1"/>
    <property type="status" value="JOINED"/>
    <property type="molecule type" value="Genomic_DNA"/>
</dbReference>
<dbReference type="EMBL" id="X90590">
    <property type="protein sequence ID" value="CAA62215.1"/>
    <property type="status" value="JOINED"/>
    <property type="molecule type" value="Genomic_DNA"/>
</dbReference>
<dbReference type="CCDS" id="CCDS33932.1">
    <molecule id="P35913-1"/>
</dbReference>
<dbReference type="CCDS" id="CCDS46993.1">
    <molecule id="P35913-3"/>
</dbReference>
<dbReference type="CCDS" id="CCDS54703.1">
    <molecule id="P35913-2"/>
</dbReference>
<dbReference type="PIR" id="A42828">
    <property type="entry name" value="A42828"/>
</dbReference>
<dbReference type="RefSeq" id="NP_000274.3">
    <molecule id="P35913-1"/>
    <property type="nucleotide sequence ID" value="NM_000283.4"/>
</dbReference>
<dbReference type="RefSeq" id="NP_001138763.2">
    <molecule id="P35913-2"/>
    <property type="nucleotide sequence ID" value="NM_001145291.2"/>
</dbReference>
<dbReference type="RefSeq" id="NP_001138764.2">
    <molecule id="P35913-3"/>
    <property type="nucleotide sequence ID" value="NM_001145292.2"/>
</dbReference>
<dbReference type="RefSeq" id="NP_001366175.1">
    <molecule id="P35913-3"/>
    <property type="nucleotide sequence ID" value="NM_001379246.1"/>
</dbReference>
<dbReference type="RefSeq" id="NP_001366176.1">
    <molecule id="P35913-3"/>
    <property type="nucleotide sequence ID" value="NM_001379247.1"/>
</dbReference>
<dbReference type="RefSeq" id="XP_016863774.1">
    <property type="nucleotide sequence ID" value="XM_017008285.1"/>
</dbReference>
<dbReference type="RefSeq" id="XP_016863775.1">
    <property type="nucleotide sequence ID" value="XM_017008286.1"/>
</dbReference>
<dbReference type="SMR" id="P35913"/>
<dbReference type="BioGRID" id="111184">
    <property type="interactions" value="24"/>
</dbReference>
<dbReference type="CORUM" id="P35913"/>
<dbReference type="FunCoup" id="P35913">
    <property type="interactions" value="168"/>
</dbReference>
<dbReference type="IntAct" id="P35913">
    <property type="interactions" value="6"/>
</dbReference>
<dbReference type="STRING" id="9606.ENSP00000420295"/>
<dbReference type="BindingDB" id="P35913"/>
<dbReference type="ChEMBL" id="CHEMBL3430880"/>
<dbReference type="DrugBank" id="DB00201">
    <property type="generic name" value="Caffeine"/>
</dbReference>
<dbReference type="DrugBank" id="DB09283">
    <property type="generic name" value="Trapidil"/>
</dbReference>
<dbReference type="DrugCentral" id="P35913"/>
<dbReference type="GlyGen" id="P35913">
    <property type="glycosylation" value="3 sites, 1 O-linked glycan (2 sites)"/>
</dbReference>
<dbReference type="iPTMnet" id="P35913"/>
<dbReference type="PhosphoSitePlus" id="P35913"/>
<dbReference type="BioMuta" id="PDE6B"/>
<dbReference type="DMDM" id="226693550"/>
<dbReference type="jPOST" id="P35913"/>
<dbReference type="MassIVE" id="P35913"/>
<dbReference type="PaxDb" id="9606-ENSP00000420295"/>
<dbReference type="PeptideAtlas" id="P35913"/>
<dbReference type="ProteomicsDB" id="18284"/>
<dbReference type="ProteomicsDB" id="55162">
    <molecule id="P35913-1"/>
</dbReference>
<dbReference type="ProteomicsDB" id="55163">
    <molecule id="P35913-2"/>
</dbReference>
<dbReference type="Antibodypedia" id="8018">
    <property type="antibodies" value="118 antibodies from 26 providers"/>
</dbReference>
<dbReference type="DNASU" id="5158"/>
<dbReference type="Ensembl" id="ENST00000255622.10">
    <molecule id="P35913-2"/>
    <property type="protein sequence ID" value="ENSP00000255622.6"/>
    <property type="gene ID" value="ENSG00000133256.13"/>
</dbReference>
<dbReference type="Ensembl" id="ENST00000429163.6">
    <molecule id="P35913-3"/>
    <property type="protein sequence ID" value="ENSP00000406334.2"/>
    <property type="gene ID" value="ENSG00000133256.13"/>
</dbReference>
<dbReference type="Ensembl" id="ENST00000496514.6">
    <molecule id="P35913-1"/>
    <property type="protein sequence ID" value="ENSP00000420295.1"/>
    <property type="gene ID" value="ENSG00000133256.13"/>
</dbReference>
<dbReference type="GeneID" id="5158"/>
<dbReference type="KEGG" id="hsa:5158"/>
<dbReference type="MANE-Select" id="ENST00000496514.6">
    <property type="protein sequence ID" value="ENSP00000420295.1"/>
    <property type="RefSeq nucleotide sequence ID" value="NM_000283.4"/>
    <property type="RefSeq protein sequence ID" value="NP_000274.3"/>
</dbReference>
<dbReference type="UCSC" id="uc003gao.5">
    <molecule id="P35913-1"/>
    <property type="organism name" value="human"/>
</dbReference>
<dbReference type="AGR" id="HGNC:8786"/>
<dbReference type="CTD" id="5158"/>
<dbReference type="DisGeNET" id="5158"/>
<dbReference type="GeneCards" id="PDE6B"/>
<dbReference type="GeneReviews" id="PDE6B"/>
<dbReference type="HGNC" id="HGNC:8786">
    <property type="gene designation" value="PDE6B"/>
</dbReference>
<dbReference type="HPA" id="ENSG00000133256">
    <property type="expression patterns" value="Tissue enriched (retina)"/>
</dbReference>
<dbReference type="MalaCards" id="PDE6B"/>
<dbReference type="MIM" id="163500">
    <property type="type" value="phenotype"/>
</dbReference>
<dbReference type="MIM" id="180072">
    <property type="type" value="gene"/>
</dbReference>
<dbReference type="MIM" id="613801">
    <property type="type" value="phenotype"/>
</dbReference>
<dbReference type="neXtProt" id="NX_P35913"/>
<dbReference type="OpenTargets" id="ENSG00000133256"/>
<dbReference type="Orphanet" id="215">
    <property type="disease" value="Congenital stationary night blindness"/>
</dbReference>
<dbReference type="Orphanet" id="791">
    <property type="disease" value="Retinitis pigmentosa"/>
</dbReference>
<dbReference type="PharmGKB" id="PA33134"/>
<dbReference type="VEuPathDB" id="HostDB:ENSG00000133256"/>
<dbReference type="eggNOG" id="KOG3689">
    <property type="taxonomic scope" value="Eukaryota"/>
</dbReference>
<dbReference type="GeneTree" id="ENSGT00940000156471"/>
<dbReference type="HOGENOM" id="CLU_006980_2_0_1"/>
<dbReference type="InParanoid" id="P35913"/>
<dbReference type="OMA" id="REVYDCE"/>
<dbReference type="OrthoDB" id="546632at2759"/>
<dbReference type="PAN-GO" id="P35913">
    <property type="GO annotations" value="4 GO annotations based on evolutionary models"/>
</dbReference>
<dbReference type="PhylomeDB" id="P35913"/>
<dbReference type="TreeFam" id="TF316499"/>
<dbReference type="PathwayCommons" id="P35913"/>
<dbReference type="Reactome" id="R-HSA-2485179">
    <property type="pathway name" value="Activation of the phototransduction cascade"/>
</dbReference>
<dbReference type="Reactome" id="R-HSA-2514859">
    <property type="pathway name" value="Inactivation, recovery and regulation of the phototransduction cascade"/>
</dbReference>
<dbReference type="Reactome" id="R-HSA-4086398">
    <property type="pathway name" value="Ca2+ pathway"/>
</dbReference>
<dbReference type="SignaLink" id="P35913"/>
<dbReference type="BioGRID-ORCS" id="5158">
    <property type="hits" value="9 hits in 1149 CRISPR screens"/>
</dbReference>
<dbReference type="ChiTaRS" id="PDE6B">
    <property type="organism name" value="human"/>
</dbReference>
<dbReference type="GeneWiki" id="PDE6B"/>
<dbReference type="GenomeRNAi" id="5158"/>
<dbReference type="Pharos" id="P35913">
    <property type="development level" value="Tclin"/>
</dbReference>
<dbReference type="PRO" id="PR:P35913"/>
<dbReference type="Proteomes" id="UP000005640">
    <property type="component" value="Chromosome 4"/>
</dbReference>
<dbReference type="RNAct" id="P35913">
    <property type="molecule type" value="protein"/>
</dbReference>
<dbReference type="Bgee" id="ENSG00000133256">
    <property type="expression patterns" value="Expressed in C1 segment of cervical spinal cord and 106 other cell types or tissues"/>
</dbReference>
<dbReference type="ExpressionAtlas" id="P35913">
    <property type="expression patterns" value="baseline and differential"/>
</dbReference>
<dbReference type="GO" id="GO:0097381">
    <property type="term" value="C:photoreceptor disc membrane"/>
    <property type="evidence" value="ECO:0000304"/>
    <property type="project" value="Reactome"/>
</dbReference>
<dbReference type="GO" id="GO:0042622">
    <property type="term" value="C:photoreceptor outer segment membrane"/>
    <property type="evidence" value="ECO:0000318"/>
    <property type="project" value="GO_Central"/>
</dbReference>
<dbReference type="GO" id="GO:0005886">
    <property type="term" value="C:plasma membrane"/>
    <property type="evidence" value="ECO:0000304"/>
    <property type="project" value="Reactome"/>
</dbReference>
<dbReference type="GO" id="GO:0004115">
    <property type="term" value="F:3',5'-cyclic-AMP phosphodiesterase activity"/>
    <property type="evidence" value="ECO:0000318"/>
    <property type="project" value="GO_Central"/>
</dbReference>
<dbReference type="GO" id="GO:0047555">
    <property type="term" value="F:3',5'-cyclic-GMP phosphodiesterase activity"/>
    <property type="evidence" value="ECO:0000318"/>
    <property type="project" value="GO_Central"/>
</dbReference>
<dbReference type="GO" id="GO:0046872">
    <property type="term" value="F:metal ion binding"/>
    <property type="evidence" value="ECO:0007669"/>
    <property type="project" value="UniProtKB-KW"/>
</dbReference>
<dbReference type="GO" id="GO:0019933">
    <property type="term" value="P:cAMP-mediated signaling"/>
    <property type="evidence" value="ECO:0000318"/>
    <property type="project" value="GO_Central"/>
</dbReference>
<dbReference type="GO" id="GO:0043153">
    <property type="term" value="P:entrainment of circadian clock by photoperiod"/>
    <property type="evidence" value="ECO:0000250"/>
    <property type="project" value="UniProtKB"/>
</dbReference>
<dbReference type="GO" id="GO:0007603">
    <property type="term" value="P:phototransduction, visible light"/>
    <property type="evidence" value="ECO:0000304"/>
    <property type="project" value="ProtInc"/>
</dbReference>
<dbReference type="GO" id="GO:0060041">
    <property type="term" value="P:retina development in camera-type eye"/>
    <property type="evidence" value="ECO:0000318"/>
    <property type="project" value="GO_Central"/>
</dbReference>
<dbReference type="GO" id="GO:1990009">
    <property type="term" value="P:retinal cell apoptotic process"/>
    <property type="evidence" value="ECO:0007669"/>
    <property type="project" value="Ensembl"/>
</dbReference>
<dbReference type="GO" id="GO:0007601">
    <property type="term" value="P:visual perception"/>
    <property type="evidence" value="ECO:0000304"/>
    <property type="project" value="ProtInc"/>
</dbReference>
<dbReference type="CDD" id="cd00077">
    <property type="entry name" value="HDc"/>
    <property type="match status" value="1"/>
</dbReference>
<dbReference type="FunFam" id="1.10.1300.10:FF:000005">
    <property type="entry name" value="Phosphodiesterase"/>
    <property type="match status" value="1"/>
</dbReference>
<dbReference type="FunFam" id="3.30.450.40:FF:000001">
    <property type="entry name" value="Phosphodiesterase"/>
    <property type="match status" value="1"/>
</dbReference>
<dbReference type="FunFam" id="3.30.450.40:FF:000010">
    <property type="entry name" value="Phosphodiesterase"/>
    <property type="match status" value="1"/>
</dbReference>
<dbReference type="Gene3D" id="3.30.450.40">
    <property type="match status" value="2"/>
</dbReference>
<dbReference type="Gene3D" id="1.10.1300.10">
    <property type="entry name" value="3'5'-cyclic nucleotide phosphodiesterase, catalytic domain"/>
    <property type="match status" value="1"/>
</dbReference>
<dbReference type="InterPro" id="IPR003018">
    <property type="entry name" value="GAF"/>
</dbReference>
<dbReference type="InterPro" id="IPR029016">
    <property type="entry name" value="GAF-like_dom_sf"/>
</dbReference>
<dbReference type="InterPro" id="IPR003607">
    <property type="entry name" value="HD/PDEase_dom"/>
</dbReference>
<dbReference type="InterPro" id="IPR023088">
    <property type="entry name" value="PDEase"/>
</dbReference>
<dbReference type="InterPro" id="IPR002073">
    <property type="entry name" value="PDEase_catalytic_dom"/>
</dbReference>
<dbReference type="InterPro" id="IPR036971">
    <property type="entry name" value="PDEase_catalytic_dom_sf"/>
</dbReference>
<dbReference type="InterPro" id="IPR023174">
    <property type="entry name" value="PDEase_CS"/>
</dbReference>
<dbReference type="PANTHER" id="PTHR11347">
    <property type="entry name" value="CYCLIC NUCLEOTIDE PHOSPHODIESTERASE"/>
    <property type="match status" value="1"/>
</dbReference>
<dbReference type="Pfam" id="PF01590">
    <property type="entry name" value="GAF"/>
    <property type="match status" value="2"/>
</dbReference>
<dbReference type="Pfam" id="PF00233">
    <property type="entry name" value="PDEase_I"/>
    <property type="match status" value="1"/>
</dbReference>
<dbReference type="PRINTS" id="PR00387">
    <property type="entry name" value="PDIESTERASE1"/>
</dbReference>
<dbReference type="SMART" id="SM00065">
    <property type="entry name" value="GAF"/>
    <property type="match status" value="2"/>
</dbReference>
<dbReference type="SMART" id="SM00471">
    <property type="entry name" value="HDc"/>
    <property type="match status" value="1"/>
</dbReference>
<dbReference type="SUPFAM" id="SSF55781">
    <property type="entry name" value="GAF domain-like"/>
    <property type="match status" value="2"/>
</dbReference>
<dbReference type="SUPFAM" id="SSF109604">
    <property type="entry name" value="HD-domain/PDEase-like"/>
    <property type="match status" value="1"/>
</dbReference>
<dbReference type="PROSITE" id="PS00126">
    <property type="entry name" value="PDEASE_I_1"/>
    <property type="match status" value="1"/>
</dbReference>
<dbReference type="PROSITE" id="PS51845">
    <property type="entry name" value="PDEASE_I_2"/>
    <property type="match status" value="1"/>
</dbReference>
<sequence>MSLSEEQARSFLDQNPDFARQYFGKKLSPENVAAACEDGCPPDCDSLRDLCQVEESTALLELVQDMQESINMERVVFKVLRRLCTLLQADRCSLFMYRQRNGVAELATRLFSVQPDSVLEDCLVPPDSEIVFPLDIGVVGHVAQTKKMVNVEDVAECPHFSSFADELTDYKTKNMLATPIMNGKDVVAVIMAVNKLNGPFFTSEDEDVFLKYLNFATLYLKIYHLSYLHNCETRRGQVLLWSANKVFEELTDIERQFHKAFYTVRAYLNCERYSVGLLDMTKEKEFFDVWSVLMGESQPYSGPRTPDGREIVFYKVIDYVLHGKEEIKVIPTPSADHWALASGLPSYVAESGFICNIMNASADEMFKFQEGALDDSGWLIKNVLSMPIVNKKEEIVGVATFYNRKDGKPFDEQDEVLMESLTQFLGWSVMNTDTYDKMNKLENRKDIAQDMVLYHVKCDRDEIQLILPTRARLGKEPADCDEDELGEILKEELPGPTTFDIYEFHFSDLECTELDLVKCGIQMYYELGVVRKFQIPQEVLVRFLFSISKGYRRITYHNWRHGFNVAQTMFTLLMTGKLKSYYTDLEAFAMVTAGLCHDIDHRGTNNLYQMKSQNPLAKLHGSSILERHHLEFGKFLLSEETLNIYQNLNRRQHEHVIHLMDIAIIATDLALYFKKRAMFQKIVDESKNYQDKKSWVEYLSLETTRKEIVMAMMMTACDLSAITKPWEVQSKVALLVAAEFWEQGDLERTVLDQQPIPMMDRNKAAELPKLQVGFIDFVCTFVYKEFSRFHEEILPMFDRLQNNRKEWKALADEYEAKVKALEEKEEEERVAAKKVGTEICNGGPAPKSSTCCIL</sequence>
<accession>P35913</accession>
<accession>B7Z9T9</accession>
<accession>E7ETT3</accession>
<accession>Q53XN5</accession>
<accession>Q9BWH5</accession>
<accession>Q9UD49</accession>
<name>PDE6B_HUMAN</name>
<feature type="initiator methionine" description="Removed" evidence="2">
    <location>
        <position position="1"/>
    </location>
</feature>
<feature type="chain" id="PRO_0000023348" description="Rod cGMP-specific 3',5'-cyclic phosphodiesterase subunit beta">
    <location>
        <begin position="2"/>
        <end position="851"/>
    </location>
</feature>
<feature type="propeptide" id="PRO_0000023349" description="Removed in mature form" evidence="1">
    <location>
        <begin position="852"/>
        <end position="854"/>
    </location>
</feature>
<feature type="domain" description="GAF 1">
    <location>
        <begin position="71"/>
        <end position="220"/>
    </location>
</feature>
<feature type="domain" description="GAF 2">
    <location>
        <begin position="252"/>
        <end position="429"/>
    </location>
</feature>
<feature type="domain" description="PDEase" evidence="5">
    <location>
        <begin position="481"/>
        <end position="814"/>
    </location>
</feature>
<feature type="active site" description="Proton donor" evidence="4">
    <location>
        <position position="557"/>
    </location>
</feature>
<feature type="binding site" evidence="4">
    <location>
        <position position="561"/>
    </location>
    <ligand>
        <name>a divalent metal cation</name>
        <dbReference type="ChEBI" id="CHEBI:60240"/>
        <label>1</label>
    </ligand>
</feature>
<feature type="binding site" evidence="4">
    <location>
        <position position="597"/>
    </location>
    <ligand>
        <name>a divalent metal cation</name>
        <dbReference type="ChEBI" id="CHEBI:60240"/>
        <label>1</label>
    </ligand>
</feature>
<feature type="binding site" evidence="4">
    <location>
        <position position="598"/>
    </location>
    <ligand>
        <name>a divalent metal cation</name>
        <dbReference type="ChEBI" id="CHEBI:60240"/>
        <label>1</label>
    </ligand>
</feature>
<feature type="binding site" evidence="4">
    <location>
        <position position="598"/>
    </location>
    <ligand>
        <name>a divalent metal cation</name>
        <dbReference type="ChEBI" id="CHEBI:60240"/>
        <label>2</label>
    </ligand>
</feature>
<feature type="binding site" evidence="4">
    <location>
        <position position="718"/>
    </location>
    <ligand>
        <name>a divalent metal cation</name>
        <dbReference type="ChEBI" id="CHEBI:60240"/>
        <label>1</label>
    </ligand>
</feature>
<feature type="modified residue" description="N-acetylserine" evidence="2">
    <location>
        <position position="2"/>
    </location>
</feature>
<feature type="lipid moiety-binding region" description="S-geranylgeranyl cysteine" evidence="1">
    <location>
        <position position="851"/>
    </location>
</feature>
<feature type="splice variant" id="VSP_044919" description="In isoform 3." evidence="22">
    <location>
        <begin position="1"/>
        <end position="279"/>
    </location>
</feature>
<feature type="splice variant" id="VSP_036884" description="In isoform 2." evidence="23 24">
    <location>
        <position position="835"/>
    </location>
</feature>
<feature type="sequence variant" id="VAR_009283" description="In RP40; autosomal recessive; dbSNP:rs144590560." evidence="12">
    <original>R</original>
    <variation>C</variation>
    <location>
        <position position="74"/>
    </location>
</feature>
<feature type="sequence variant" id="VAR_068361" description="In RP40; dbSNP:rs555600300." evidence="11">
    <original>R</original>
    <variation>H</variation>
    <location>
        <position position="100"/>
    </location>
</feature>
<feature type="sequence variant" id="VAR_009284" description="In dbSNP:rs115775983." evidence="17">
    <original>E</original>
    <variation>K</variation>
    <location>
        <position position="166"/>
    </location>
</feature>
<feature type="sequence variant" id="VAR_009285" description="In dbSNP:rs551545798." evidence="17">
    <original>Y</original>
    <variation>H</variation>
    <location>
        <position position="212"/>
    </location>
</feature>
<feature type="sequence variant" id="VAR_009286" description="In RP40; autosomal recessive; dbSNP:rs62295357.">
    <original>Y</original>
    <variation>H</variation>
    <location>
        <position position="219"/>
    </location>
</feature>
<feature type="sequence variant" id="VAR_009287" description="In RP40; autosomal recessive and autosomal dominant." evidence="17">
    <original>L</original>
    <variation>H</variation>
    <location>
        <position position="228"/>
    </location>
</feature>
<feature type="sequence variant" id="VAR_009288" description="In dbSNP:rs201584824.">
    <original>L</original>
    <variation>I</variation>
    <location>
        <position position="228"/>
    </location>
</feature>
<feature type="sequence variant" id="VAR_009289" description="In CSNBAD2; dbSNP:rs121918582." evidence="13">
    <original>H</original>
    <variation>N</variation>
    <location>
        <position position="258"/>
    </location>
</feature>
<feature type="sequence variant" id="VAR_054868" description="In dbSNP:rs10902758." evidence="6 7 8 9 18 21">
    <original>V</original>
    <variation>I</variation>
    <location>
        <position position="320"/>
    </location>
</feature>
<feature type="sequence variant" id="VAR_009290" description="In RP40; autosomal recessive; dbSNP:rs760766981.">
    <original>L</original>
    <variation>P</variation>
    <location>
        <position position="527"/>
    </location>
</feature>
<feature type="sequence variant" id="VAR_009291" description="In RP40; autosomal recessive; dbSNP:rs527236088." evidence="20">
    <original>I</original>
    <variation>N</variation>
    <location>
        <position position="535"/>
    </location>
</feature>
<feature type="sequence variant" id="VAR_009292" description="In RP40; autosomal recessive; dbSNP:rs751859807." evidence="19">
    <original>R</original>
    <variation>Q</variation>
    <location>
        <position position="552"/>
    </location>
</feature>
<feature type="sequence variant" id="VAR_006050" description="In RP40; autosomal dominant; dbSNP:rs121918581." evidence="14">
    <original>H</original>
    <variation>Y</variation>
    <location>
        <position position="557"/>
    </location>
</feature>
<feature type="sequence variant" id="VAR_006051" description="In RP40; autosomal recessive." evidence="16">
    <original>G</original>
    <variation>D</variation>
    <location>
        <position position="576"/>
    </location>
</feature>
<feature type="sequence variant" id="VAR_054869" description="In dbSNP:rs17849286." evidence="9 21">
    <original>E</original>
    <variation>D</variation>
    <location>
        <position position="654"/>
    </location>
</feature>
<feature type="sequence variant" id="VAR_006052" description="In RP40; autosomal recessive; dbSNP:rs1737497878." evidence="15">
    <original>L</original>
    <variation>R</variation>
    <location>
        <position position="699"/>
    </location>
</feature>
<feature type="sequence variant" id="VAR_068362" description="In RP40; dbSNP:rs141563823." evidence="11">
    <original>D</original>
    <variation>N</variation>
    <location>
        <position position="776"/>
    </location>
</feature>
<feature type="sequence variant" id="VAR_009293" description="In RP40; autosomal recessive.">
    <original>L</original>
    <variation>R</variation>
    <location>
        <position position="854"/>
    </location>
</feature>
<feature type="sequence conflict" description="In Ref. 1; CAA44569, 2; CAA46932 and 3; AAB22690." evidence="25" ref="1 2 3">
    <original>AAA</original>
    <variation>GRG</variation>
    <location>
        <begin position="33"/>
        <end position="35"/>
    </location>
</feature>
<feature type="sequence conflict" description="In Ref. 1; CAA44569." evidence="25" ref="1">
    <original>K</original>
    <variation>Q</variation>
    <location>
        <position position="315"/>
    </location>
</feature>
<feature type="sequence conflict" description="In Ref. 1; CAA44569." evidence="25" ref="1">
    <original>V</original>
    <variation>L</variation>
    <location>
        <position position="320"/>
    </location>
</feature>
<feature type="sequence conflict" description="In Ref. 1; CAA44569." evidence="25" ref="1">
    <original>A</original>
    <variation>R</variation>
    <location>
        <position position="360"/>
    </location>
</feature>
<feature type="sequence conflict" description="In Ref. 1; CAA44569." evidence="25" ref="1">
    <original>Y</original>
    <variation>I</variation>
    <location>
        <position position="698"/>
    </location>
</feature>
<reference key="1">
    <citation type="journal article" date="1991" name="Nucleic Acids Res.">
        <title>Genomic organization and complete sequence of the human gene encoding the beta-subunit of the cGMP phosphodiesterase and its localisation to 4p16.3.</title>
        <authorList>
            <person name="Weber B."/>
            <person name="Riess O."/>
            <person name="Hutchinson G."/>
            <person name="Collins C."/>
            <person name="Lin B."/>
            <person name="Kowbel D."/>
            <person name="Andrew S."/>
            <person name="Schappert K.T."/>
            <person name="Hayden M.R."/>
        </authorList>
    </citation>
    <scope>NUCLEOTIDE SEQUENCE [GENOMIC DNA]</scope>
</reference>
<reference key="2">
    <citation type="journal article" date="1992" name="Bioorg. Khim.">
        <title>Structural studies of cDNA and the gene for the beta-subunit of cGMP phosphodiesterase from human retina.</title>
        <authorList>
            <person name="Khramtsov N.V."/>
            <person name="Feshchenko E.A."/>
            <person name="Suslova V.A."/>
            <person name="Terpugov B.E."/>
            <person name="Rakitina T.V."/>
            <person name="Atabekova N.V."/>
            <person name="Shmukler B.E."/>
            <person name="Lipkin V.M."/>
        </authorList>
    </citation>
    <scope>NUCLEOTIDE SEQUENCE [MRNA] (ISOFORM 1)</scope>
    <scope>VARIANT ILE-320</scope>
    <source>
        <tissue>Retinal rod cell</tissue>
    </source>
</reference>
<reference key="3">
    <citation type="journal article" date="1992" name="Genomics">
        <title>The human beta-subunit of rod photoreceptor cGMP phosphodiesterase: complete retinal cDNA sequence and evidence for expression in brain.</title>
        <authorList>
            <person name="Collins C."/>
            <person name="Hutchinson G."/>
            <person name="Kowbel D."/>
            <person name="Riess O."/>
            <person name="Weber B."/>
            <person name="Hayden M.R."/>
        </authorList>
    </citation>
    <scope>NUCLEOTIDE SEQUENCE [MRNA] (ISOFORM 1)</scope>
    <scope>VARIANT ILE-320</scope>
    <source>
        <tissue>Retina</tissue>
    </source>
</reference>
<reference key="4">
    <citation type="journal article" date="1993" name="FEBS Lett.">
        <title>The human rod photoreceptor cGMP phosphodiesterase beta-subunit. Structural studies of its cDNA and gene.</title>
        <authorList>
            <person name="Khramtsov N.V."/>
            <person name="Feshchenko E.A."/>
            <person name="Suslova V.A."/>
            <person name="Shmukler B.E."/>
            <person name="Terpugov B.E."/>
            <person name="Rakitina T.V."/>
            <person name="Atabekova N.V."/>
            <person name="Lipkin V.M."/>
        </authorList>
    </citation>
    <scope>NUCLEOTIDE SEQUENCE [MRNA] (ISOFORM 1)</scope>
    <source>
        <tissue>Retina</tissue>
    </source>
</reference>
<reference key="5">
    <citation type="submission" date="2003-08" db="EMBL/GenBank/DDBJ databases">
        <title>Cloning of human full-length CDSs in BD Creator(TM) system donor vector.</title>
        <authorList>
            <person name="Kalnine N."/>
            <person name="Chen X."/>
            <person name="Rolfs A."/>
            <person name="Halleck A."/>
            <person name="Hines L."/>
            <person name="Eisenstein S."/>
            <person name="Koundinya M."/>
            <person name="Raphael J."/>
            <person name="Moreira D."/>
            <person name="Kelley T."/>
            <person name="LaBaer J."/>
            <person name="Lin Y."/>
            <person name="Phelan M."/>
            <person name="Farmer A."/>
        </authorList>
    </citation>
    <scope>NUCLEOTIDE SEQUENCE [LARGE SCALE MRNA] (ISOFORM 2)</scope>
    <scope>VARIANTS ILE-320 AND ASP-654</scope>
</reference>
<reference key="6">
    <citation type="journal article" date="2004" name="Nat. Genet.">
        <title>Complete sequencing and characterization of 21,243 full-length human cDNAs.</title>
        <authorList>
            <person name="Ota T."/>
            <person name="Suzuki Y."/>
            <person name="Nishikawa T."/>
            <person name="Otsuki T."/>
            <person name="Sugiyama T."/>
            <person name="Irie R."/>
            <person name="Wakamatsu A."/>
            <person name="Hayashi K."/>
            <person name="Sato H."/>
            <person name="Nagai K."/>
            <person name="Kimura K."/>
            <person name="Makita H."/>
            <person name="Sekine M."/>
            <person name="Obayashi M."/>
            <person name="Nishi T."/>
            <person name="Shibahara T."/>
            <person name="Tanaka T."/>
            <person name="Ishii S."/>
            <person name="Yamamoto J."/>
            <person name="Saito K."/>
            <person name="Kawai Y."/>
            <person name="Isono Y."/>
            <person name="Nakamura Y."/>
            <person name="Nagahari K."/>
            <person name="Murakami K."/>
            <person name="Yasuda T."/>
            <person name="Iwayanagi T."/>
            <person name="Wagatsuma M."/>
            <person name="Shiratori A."/>
            <person name="Sudo H."/>
            <person name="Hosoiri T."/>
            <person name="Kaku Y."/>
            <person name="Kodaira H."/>
            <person name="Kondo H."/>
            <person name="Sugawara M."/>
            <person name="Takahashi M."/>
            <person name="Kanda K."/>
            <person name="Yokoi T."/>
            <person name="Furuya T."/>
            <person name="Kikkawa E."/>
            <person name="Omura Y."/>
            <person name="Abe K."/>
            <person name="Kamihara K."/>
            <person name="Katsuta N."/>
            <person name="Sato K."/>
            <person name="Tanikawa M."/>
            <person name="Yamazaki M."/>
            <person name="Ninomiya K."/>
            <person name="Ishibashi T."/>
            <person name="Yamashita H."/>
            <person name="Murakawa K."/>
            <person name="Fujimori K."/>
            <person name="Tanai H."/>
            <person name="Kimata M."/>
            <person name="Watanabe M."/>
            <person name="Hiraoka S."/>
            <person name="Chiba Y."/>
            <person name="Ishida S."/>
            <person name="Ono Y."/>
            <person name="Takiguchi S."/>
            <person name="Watanabe S."/>
            <person name="Yosida M."/>
            <person name="Hotuta T."/>
            <person name="Kusano J."/>
            <person name="Kanehori K."/>
            <person name="Takahashi-Fujii A."/>
            <person name="Hara H."/>
            <person name="Tanase T.-O."/>
            <person name="Nomura Y."/>
            <person name="Togiya S."/>
            <person name="Komai F."/>
            <person name="Hara R."/>
            <person name="Takeuchi K."/>
            <person name="Arita M."/>
            <person name="Imose N."/>
            <person name="Musashino K."/>
            <person name="Yuuki H."/>
            <person name="Oshima A."/>
            <person name="Sasaki N."/>
            <person name="Aotsuka S."/>
            <person name="Yoshikawa Y."/>
            <person name="Matsunawa H."/>
            <person name="Ichihara T."/>
            <person name="Shiohata N."/>
            <person name="Sano S."/>
            <person name="Moriya S."/>
            <person name="Momiyama H."/>
            <person name="Satoh N."/>
            <person name="Takami S."/>
            <person name="Terashima Y."/>
            <person name="Suzuki O."/>
            <person name="Nakagawa S."/>
            <person name="Senoh A."/>
            <person name="Mizoguchi H."/>
            <person name="Goto Y."/>
            <person name="Shimizu F."/>
            <person name="Wakebe H."/>
            <person name="Hishigaki H."/>
            <person name="Watanabe T."/>
            <person name="Sugiyama A."/>
            <person name="Takemoto M."/>
            <person name="Kawakami B."/>
            <person name="Yamazaki M."/>
            <person name="Watanabe K."/>
            <person name="Kumagai A."/>
            <person name="Itakura S."/>
            <person name="Fukuzumi Y."/>
            <person name="Fujimori Y."/>
            <person name="Komiyama M."/>
            <person name="Tashiro H."/>
            <person name="Tanigami A."/>
            <person name="Fujiwara T."/>
            <person name="Ono T."/>
            <person name="Yamada K."/>
            <person name="Fujii Y."/>
            <person name="Ozaki K."/>
            <person name="Hirao M."/>
            <person name="Ohmori Y."/>
            <person name="Kawabata A."/>
            <person name="Hikiji T."/>
            <person name="Kobatake N."/>
            <person name="Inagaki H."/>
            <person name="Ikema Y."/>
            <person name="Okamoto S."/>
            <person name="Okitani R."/>
            <person name="Kawakami T."/>
            <person name="Noguchi S."/>
            <person name="Itoh T."/>
            <person name="Shigeta K."/>
            <person name="Senba T."/>
            <person name="Matsumura K."/>
            <person name="Nakajima Y."/>
            <person name="Mizuno T."/>
            <person name="Morinaga M."/>
            <person name="Sasaki M."/>
            <person name="Togashi T."/>
            <person name="Oyama M."/>
            <person name="Hata H."/>
            <person name="Watanabe M."/>
            <person name="Komatsu T."/>
            <person name="Mizushima-Sugano J."/>
            <person name="Satoh T."/>
            <person name="Shirai Y."/>
            <person name="Takahashi Y."/>
            <person name="Nakagawa K."/>
            <person name="Okumura K."/>
            <person name="Nagase T."/>
            <person name="Nomura N."/>
            <person name="Kikuchi H."/>
            <person name="Masuho Y."/>
            <person name="Yamashita R."/>
            <person name="Nakai K."/>
            <person name="Yada T."/>
            <person name="Nakamura Y."/>
            <person name="Ohara O."/>
            <person name="Isogai T."/>
            <person name="Sugano S."/>
        </authorList>
    </citation>
    <scope>NUCLEOTIDE SEQUENCE [LARGE SCALE MRNA] (ISOFORM 3)</scope>
    <scope>VARIANT ILE-320</scope>
    <source>
        <tissue>Hippocampus</tissue>
    </source>
</reference>
<reference key="7">
    <citation type="journal article" date="2005" name="Nature">
        <title>Generation and annotation of the DNA sequences of human chromosomes 2 and 4.</title>
        <authorList>
            <person name="Hillier L.W."/>
            <person name="Graves T.A."/>
            <person name="Fulton R.S."/>
            <person name="Fulton L.A."/>
            <person name="Pepin K.H."/>
            <person name="Minx P."/>
            <person name="Wagner-McPherson C."/>
            <person name="Layman D."/>
            <person name="Wylie K."/>
            <person name="Sekhon M."/>
            <person name="Becker M.C."/>
            <person name="Fewell G.A."/>
            <person name="Delehaunty K.D."/>
            <person name="Miner T.L."/>
            <person name="Nash W.E."/>
            <person name="Kremitzki C."/>
            <person name="Oddy L."/>
            <person name="Du H."/>
            <person name="Sun H."/>
            <person name="Bradshaw-Cordum H."/>
            <person name="Ali J."/>
            <person name="Carter J."/>
            <person name="Cordes M."/>
            <person name="Harris A."/>
            <person name="Isak A."/>
            <person name="van Brunt A."/>
            <person name="Nguyen C."/>
            <person name="Du F."/>
            <person name="Courtney L."/>
            <person name="Kalicki J."/>
            <person name="Ozersky P."/>
            <person name="Abbott S."/>
            <person name="Armstrong J."/>
            <person name="Belter E.A."/>
            <person name="Caruso L."/>
            <person name="Cedroni M."/>
            <person name="Cotton M."/>
            <person name="Davidson T."/>
            <person name="Desai A."/>
            <person name="Elliott G."/>
            <person name="Erb T."/>
            <person name="Fronick C."/>
            <person name="Gaige T."/>
            <person name="Haakenson W."/>
            <person name="Haglund K."/>
            <person name="Holmes A."/>
            <person name="Harkins R."/>
            <person name="Kim K."/>
            <person name="Kruchowski S.S."/>
            <person name="Strong C.M."/>
            <person name="Grewal N."/>
            <person name="Goyea E."/>
            <person name="Hou S."/>
            <person name="Levy A."/>
            <person name="Martinka S."/>
            <person name="Mead K."/>
            <person name="McLellan M.D."/>
            <person name="Meyer R."/>
            <person name="Randall-Maher J."/>
            <person name="Tomlinson C."/>
            <person name="Dauphin-Kohlberg S."/>
            <person name="Kozlowicz-Reilly A."/>
            <person name="Shah N."/>
            <person name="Swearengen-Shahid S."/>
            <person name="Snider J."/>
            <person name="Strong J.T."/>
            <person name="Thompson J."/>
            <person name="Yoakum M."/>
            <person name="Leonard S."/>
            <person name="Pearman C."/>
            <person name="Trani L."/>
            <person name="Radionenko M."/>
            <person name="Waligorski J.E."/>
            <person name="Wang C."/>
            <person name="Rock S.M."/>
            <person name="Tin-Wollam A.-M."/>
            <person name="Maupin R."/>
            <person name="Latreille P."/>
            <person name="Wendl M.C."/>
            <person name="Yang S.-P."/>
            <person name="Pohl C."/>
            <person name="Wallis J.W."/>
            <person name="Spieth J."/>
            <person name="Bieri T.A."/>
            <person name="Berkowicz N."/>
            <person name="Nelson J.O."/>
            <person name="Osborne J."/>
            <person name="Ding L."/>
            <person name="Meyer R."/>
            <person name="Sabo A."/>
            <person name="Shotland Y."/>
            <person name="Sinha P."/>
            <person name="Wohldmann P.E."/>
            <person name="Cook L.L."/>
            <person name="Hickenbotham M.T."/>
            <person name="Eldred J."/>
            <person name="Williams D."/>
            <person name="Jones T.A."/>
            <person name="She X."/>
            <person name="Ciccarelli F.D."/>
            <person name="Izaurralde E."/>
            <person name="Taylor J."/>
            <person name="Schmutz J."/>
            <person name="Myers R.M."/>
            <person name="Cox D.R."/>
            <person name="Huang X."/>
            <person name="McPherson J.D."/>
            <person name="Mardis E.R."/>
            <person name="Clifton S.W."/>
            <person name="Warren W.C."/>
            <person name="Chinwalla A.T."/>
            <person name="Eddy S.R."/>
            <person name="Marra M.A."/>
            <person name="Ovcharenko I."/>
            <person name="Furey T.S."/>
            <person name="Miller W."/>
            <person name="Eichler E.E."/>
            <person name="Bork P."/>
            <person name="Suyama M."/>
            <person name="Torrents D."/>
            <person name="Waterston R.H."/>
            <person name="Wilson R.K."/>
        </authorList>
    </citation>
    <scope>NUCLEOTIDE SEQUENCE [LARGE SCALE GENOMIC DNA]</scope>
</reference>
<reference key="8">
    <citation type="journal article" date="2004" name="Genome Res.">
        <title>The status, quality, and expansion of the NIH full-length cDNA project: the Mammalian Gene Collection (MGC).</title>
        <authorList>
            <consortium name="The MGC Project Team"/>
        </authorList>
    </citation>
    <scope>NUCLEOTIDE SEQUENCE [LARGE SCALE MRNA] (ISOFORM 2)</scope>
    <scope>VARIANTS ILE-320 AND ASP-654</scope>
    <source>
        <tissue>Eye</tissue>
    </source>
</reference>
<reference key="9">
    <citation type="journal article" date="1994" name="Nat. Genet.">
        <title>Heterozygous missense mutation in the rod cGMP phosphodiesterase beta-subunit gene in autosomal dominant stationary night blindness.</title>
        <authorList>
            <person name="Gal A."/>
            <person name="Orth U."/>
            <person name="Baehr W."/>
            <person name="Schwinger E."/>
            <person name="Rosenberg T."/>
        </authorList>
    </citation>
    <scope>NUCLEOTIDE SEQUENCE [GENOMIC DNA] OF 197-297</scope>
    <scope>VARIANT CSNBAD2 ASN-258</scope>
</reference>
<reference key="10">
    <citation type="journal article" date="1994" name="Nat. Genet.">
        <authorList>
            <person name="Gal A."/>
            <person name="Orth U."/>
            <person name="Baehr W."/>
            <person name="Schwinger E."/>
            <person name="Rosenberg T."/>
        </authorList>
    </citation>
    <scope>ERRATUM OF PUBMED:8075643</scope>
</reference>
<reference key="11">
    <citation type="journal article" date="1996" name="Bioorg. Khim.">
        <title>Organization of the gene for the beta-subunit of human photoreceptor cyclic GMP phosphodiesterase.</title>
        <authorList>
            <person name="Suslova V.A."/>
            <person name="Suslov O.N."/>
            <person name="Kim E.E."/>
            <person name="Lipkin V.M."/>
        </authorList>
    </citation>
    <scope>NUCLEOTIDE SEQUENCE [GENOMIC DNA] OF 238-854</scope>
    <scope>VARIANT ILE-320</scope>
    <source>
        <tissue>Retinal rod cell</tissue>
    </source>
</reference>
<reference key="12">
    <citation type="journal article" date="1993" name="Nat. Genet.">
        <title>Recessive mutations in the gene encoding the beta-subunit of rod phosphodiesterase in patients with retinitis pigmentosa.</title>
        <authorList>
            <person name="McLaughlin M.E."/>
            <person name="Sandberg M.A."/>
            <person name="Berson E.L."/>
            <person name="Dryja T.P."/>
        </authorList>
    </citation>
    <scope>FUNCTION</scope>
    <scope>VARIANT RP40 TYR-557</scope>
</reference>
<reference key="13">
    <citation type="journal article" date="2010" name="J. Biol. Chem.">
        <title>Rod phosphodiesterase-6 PDE6A and PDE6B subunits are enzymatically equivalent.</title>
        <authorList>
            <person name="Muradov H."/>
            <person name="Boyd K.K."/>
            <person name="Artemyev N.O."/>
        </authorList>
    </citation>
    <scope>FUNCTION</scope>
    <scope>CATALYTIC ACTIVITY</scope>
    <scope>BIOPHYSICOCHEMICAL PROPERTIES</scope>
    <scope>SUBCELLULAR LOCATION</scope>
</reference>
<reference key="14">
    <citation type="journal article" date="1995" name="Genomics">
        <title>Mutations in the PDE6B gene in autosomal recessive retinitis pigmentosa.</title>
        <authorList>
            <person name="Danciger M."/>
            <person name="Blaney J."/>
            <person name="Gao Y.Q."/>
            <person name="Zhao D.Y."/>
            <person name="Heckenlively J.R."/>
            <person name="Jacobson S.G."/>
            <person name="Farber D.B."/>
        </authorList>
    </citation>
    <scope>VARIANT RP40 ASP-576</scope>
</reference>
<reference key="15">
    <citation type="journal article" date="1996" name="Exp. Eye Res.">
        <title>Screening of the PDE6B gene in patients with autosomal dominant retinitis pigmentosa.</title>
        <authorList>
            <person name="Gao Y.Q."/>
            <person name="Danciger M."/>
            <person name="Zhao D.Y."/>
            <person name="Blaney J."/>
            <person name="Piriev N.I."/>
            <person name="Shih J."/>
            <person name="Jacobson S.G."/>
            <person name="Heckenlively J.H."/>
            <person name="Farber D.B."/>
        </authorList>
    </citation>
    <scope>VARIANT RP40 HIS-228</scope>
    <scope>VARIANTS LYS-166 AND HIS-212</scope>
</reference>
<reference key="16">
    <citation type="journal article" date="1996" name="Hum. Genet.">
        <title>A novel mutation in exon 17 of the beta-subunit of rod phosphodiesterase in two RP sisters of a consanguineous family.</title>
        <authorList>
            <person name="Valverde D."/>
            <person name="Solans T."/>
            <person name="Grinberg D."/>
            <person name="Balcells S."/>
            <person name="Vilageliu L."/>
            <person name="Bayes M."/>
            <person name="Chivelet P."/>
            <person name="Besmond C."/>
            <person name="Goossens M."/>
            <person name="Gonzalez-Duarte R."/>
            <person name="Baiget M."/>
        </authorList>
    </citation>
    <scope>VARIANT RP40 ARG-699</scope>
</reference>
<reference key="17">
    <citation type="journal article" date="1996" name="Hum. Mutat.">
        <title>Identification of a novel R552Q mutation in exon 13 of the beta-subunit of rod phosphodiesterase gene in a Spanish family with autosomal recessive retinitis pigmentosa.</title>
        <authorList>
            <person name="Valverde D."/>
            <person name="Baiget M."/>
            <person name="Seminago R."/>
            <person name="del Rio E."/>
            <person name="Garcia-Sandoval B."/>
            <person name="del Rio T."/>
            <person name="Bayes M."/>
            <person name="Balcells S."/>
            <person name="Martinez A."/>
            <person name="Grinberg D."/>
            <person name="Ayuso C."/>
        </authorList>
    </citation>
    <scope>VARIANT RP40 GLN-552</scope>
</reference>
<reference key="18">
    <citation type="journal article" date="1998" name="Curr. Eye Res.">
        <title>A novel homozygous Ile535Asn mutation in the rod cGMP phosphodiesterase beta-subunit gene in two brothers of a Japanese family with autosomal recessive retinitis pigmentosa.</title>
        <authorList>
            <person name="Saga M."/>
            <person name="Mashima Y."/>
            <person name="Akeo K."/>
            <person name="Kudoh J."/>
            <person name="Oguchi Y."/>
            <person name="Shimizu N."/>
        </authorList>
    </citation>
    <scope>VARIANT RP40 ASN-535</scope>
</reference>
<reference key="19">
    <citation type="journal article" date="2012" name="Hum. Mutat.">
        <title>Next-generation genetic testing for retinitis pigmentosa.</title>
        <authorList>
            <person name="Neveling K."/>
            <person name="Collin R.W."/>
            <person name="Gilissen C."/>
            <person name="van Huet R.A."/>
            <person name="Visser L."/>
            <person name="Kwint M.P."/>
            <person name="Gijsen S.J."/>
            <person name="Zonneveld M.N."/>
            <person name="Wieskamp N."/>
            <person name="de Ligt J."/>
            <person name="Siemiatkowska A.M."/>
            <person name="Hoefsloot L.H."/>
            <person name="Buckley M.F."/>
            <person name="Kellner U."/>
            <person name="Branham K.E."/>
            <person name="den Hollander A.I."/>
            <person name="Hoischen A."/>
            <person name="Hoyng C."/>
            <person name="Klevering B.J."/>
            <person name="van den Born L.I."/>
            <person name="Veltman J.A."/>
            <person name="Cremers F.P."/>
            <person name="Scheffer H."/>
        </authorList>
    </citation>
    <scope>VARIANTS RP40 HIS-100 AND ASN-776</scope>
</reference>
<reference key="20">
    <citation type="journal article" date="2016" name="Int. J. Ophthalmol.">
        <title>Novel mutations in PDE6B causing human retinitis pigmentosa.</title>
        <authorList>
            <person name="Cheng L.L."/>
            <person name="Han R.Y."/>
            <person name="Yang F.Y."/>
            <person name="Yu X.P."/>
            <person name="Xu J.L."/>
            <person name="Min Q.J."/>
            <person name="Tian J."/>
            <person name="Ge X.L."/>
            <person name="Zheng S.S."/>
            <person name="Lin Y.W."/>
            <person name="Zheng Y.H."/>
            <person name="Qu J."/>
            <person name="Gu F."/>
        </authorList>
    </citation>
    <scope>VARIANT RP40 CYS-74</scope>
</reference>
<protein>
    <recommendedName>
        <fullName evidence="25">Rod cGMP-specific 3',5'-cyclic phosphodiesterase subunit beta</fullName>
        <shortName>GMP-PDE beta</shortName>
        <ecNumber evidence="10">3.1.4.35</ecNumber>
    </recommendedName>
</protein>
<proteinExistence type="evidence at protein level"/>
<evidence type="ECO:0000250" key="1"/>
<evidence type="ECO:0000250" key="2">
    <source>
        <dbReference type="UniProtKB" id="P23439"/>
    </source>
</evidence>
<evidence type="ECO:0000250" key="3">
    <source>
        <dbReference type="UniProtKB" id="P23440"/>
    </source>
</evidence>
<evidence type="ECO:0000250" key="4">
    <source>
        <dbReference type="UniProtKB" id="Q07343"/>
    </source>
</evidence>
<evidence type="ECO:0000255" key="5">
    <source>
        <dbReference type="PROSITE-ProRule" id="PRU01192"/>
    </source>
</evidence>
<evidence type="ECO:0000269" key="6">
    <source>
    </source>
</evidence>
<evidence type="ECO:0000269" key="7">
    <source>
    </source>
</evidence>
<evidence type="ECO:0000269" key="8">
    <source>
    </source>
</evidence>
<evidence type="ECO:0000269" key="9">
    <source>
    </source>
</evidence>
<evidence type="ECO:0000269" key="10">
    <source>
    </source>
</evidence>
<evidence type="ECO:0000269" key="11">
    <source>
    </source>
</evidence>
<evidence type="ECO:0000269" key="12">
    <source>
    </source>
</evidence>
<evidence type="ECO:0000269" key="13">
    <source>
    </source>
</evidence>
<evidence type="ECO:0000269" key="14">
    <source>
    </source>
</evidence>
<evidence type="ECO:0000269" key="15">
    <source>
    </source>
</evidence>
<evidence type="ECO:0000269" key="16">
    <source>
    </source>
</evidence>
<evidence type="ECO:0000269" key="17">
    <source>
    </source>
</evidence>
<evidence type="ECO:0000269" key="18">
    <source>
    </source>
</evidence>
<evidence type="ECO:0000269" key="19">
    <source>
    </source>
</evidence>
<evidence type="ECO:0000269" key="20">
    <source>
    </source>
</evidence>
<evidence type="ECO:0000269" key="21">
    <source ref="5"/>
</evidence>
<evidence type="ECO:0000303" key="22">
    <source>
    </source>
</evidence>
<evidence type="ECO:0000303" key="23">
    <source>
    </source>
</evidence>
<evidence type="ECO:0000303" key="24">
    <source ref="5"/>
</evidence>
<evidence type="ECO:0000305" key="25"/>
<evidence type="ECO:0000305" key="26">
    <source>
    </source>
</evidence>
<evidence type="ECO:0000312" key="27">
    <source>
        <dbReference type="HGNC" id="HGNC:8786"/>
    </source>
</evidence>
<organism>
    <name type="scientific">Homo sapiens</name>
    <name type="common">Human</name>
    <dbReference type="NCBI Taxonomy" id="9606"/>
    <lineage>
        <taxon>Eukaryota</taxon>
        <taxon>Metazoa</taxon>
        <taxon>Chordata</taxon>
        <taxon>Craniata</taxon>
        <taxon>Vertebrata</taxon>
        <taxon>Euteleostomi</taxon>
        <taxon>Mammalia</taxon>
        <taxon>Eutheria</taxon>
        <taxon>Euarchontoglires</taxon>
        <taxon>Primates</taxon>
        <taxon>Haplorrhini</taxon>
        <taxon>Catarrhini</taxon>
        <taxon>Hominidae</taxon>
        <taxon>Homo</taxon>
    </lineage>
</organism>
<keyword id="KW-0007">Acetylation</keyword>
<keyword id="KW-0025">Alternative splicing</keyword>
<keyword id="KW-0966">Cell projection</keyword>
<keyword id="KW-0140">cGMP</keyword>
<keyword id="KW-1014">Congenital stationary night blindness</keyword>
<keyword id="KW-0225">Disease variant</keyword>
<keyword id="KW-0378">Hydrolase</keyword>
<keyword id="KW-0449">Lipoprotein</keyword>
<keyword id="KW-0460">Magnesium</keyword>
<keyword id="KW-0464">Manganese</keyword>
<keyword id="KW-0472">Membrane</keyword>
<keyword id="KW-0479">Metal-binding</keyword>
<keyword id="KW-0636">Prenylation</keyword>
<keyword id="KW-1267">Proteomics identification</keyword>
<keyword id="KW-1185">Reference proteome</keyword>
<keyword id="KW-0677">Repeat</keyword>
<keyword id="KW-0682">Retinitis pigmentosa</keyword>
<keyword id="KW-0716">Sensory transduction</keyword>
<keyword id="KW-0844">Vision</keyword>
<keyword id="KW-0862">Zinc</keyword>
<comment type="function">
    <text evidence="3 10 14">Rod-specific cGMP phosphodiesterase that catalyzes the hydrolysis of 3',5'-cyclic GMP (PubMed:20940301). Necessary for the formation of a functional phosphodiesterase holoenzyme (By similarity). Involved in retinal circadian rhythm photoentrainment via modulation of UVA and orange light-induced phase-shift of the retina clock (By similarity). May participate in processes of transmission and amplification of the visual signal (PubMed:8394174).</text>
</comment>
<comment type="catalytic activity">
    <reaction evidence="10">
        <text>3',5'-cyclic GMP + H2O = GMP + H(+)</text>
        <dbReference type="Rhea" id="RHEA:16957"/>
        <dbReference type="ChEBI" id="CHEBI:15377"/>
        <dbReference type="ChEBI" id="CHEBI:15378"/>
        <dbReference type="ChEBI" id="CHEBI:57746"/>
        <dbReference type="ChEBI" id="CHEBI:58115"/>
        <dbReference type="EC" id="3.1.4.35"/>
    </reaction>
    <physiologicalReaction direction="left-to-right" evidence="26">
        <dbReference type="Rhea" id="RHEA:16958"/>
    </physiologicalReaction>
</comment>
<comment type="cofactor">
    <cofactor evidence="4">
        <name>a divalent metal cation</name>
        <dbReference type="ChEBI" id="CHEBI:60240"/>
    </cofactor>
    <text evidence="4">Binds 2 divalent metal cations per subunit. Site 1 may preferentially bind zinc ions, while site 2 has a preference for magnesium and/or manganese ions.</text>
</comment>
<comment type="biophysicochemical properties">
    <kinetics>
        <KM evidence="10">22 uM for 3',5'-cyclic GMP (with the chimera containing the N-terminal regulatory GAF domains of PDE6C and the C-terminal catalytic domain of PDE6B)</KM>
    </kinetics>
</comment>
<comment type="subunit">
    <text>Oligomer composed of two catalytic chains (alpha and beta), an inhibitory chain (gamma) and the delta chain.</text>
</comment>
<comment type="subcellular location">
    <subcellularLocation>
        <location>Membrane</location>
        <topology>Lipid-anchor</topology>
    </subcellularLocation>
    <subcellularLocation>
        <location evidence="10">Cell projection</location>
        <location evidence="10">Cilium</location>
        <location evidence="10">Photoreceptor outer segment</location>
    </subcellularLocation>
</comment>
<comment type="alternative products">
    <event type="alternative splicing"/>
    <isoform>
        <id>P35913-1</id>
        <name>1</name>
        <sequence type="displayed"/>
    </isoform>
    <isoform>
        <id>P35913-2</id>
        <name>2</name>
        <sequence type="described" ref="VSP_036884"/>
    </isoform>
    <isoform>
        <id>P35913-3</id>
        <name>3</name>
        <sequence type="described" ref="VSP_044919"/>
    </isoform>
</comment>
<comment type="disease" evidence="11 12 14 15 16 17 19 20">
    <disease id="DI-03031">
        <name>Retinitis pigmentosa 40</name>
        <acronym>RP40</acronym>
        <description>A retinal dystrophy belonging to the group of pigmentary retinopathies. Retinitis pigmentosa is characterized by retinal pigment deposits visible on fundus examination and primary loss of rod photoreceptor cells followed by secondary loss of cone photoreceptors. Patients typically have night vision blindness and loss of midperipheral visual field. As their condition progresses, they lose their far peripheral visual field and eventually central vision as well.</description>
        <dbReference type="MIM" id="613801"/>
    </disease>
    <text>The disease is caused by variants affecting the gene represented in this entry.</text>
</comment>
<comment type="disease" evidence="13">
    <disease id="DI-00372">
        <name>Night blindness, congenital stationary, autosomal dominant 2</name>
        <acronym>CSNBAD2</acronym>
        <description>A non-progressive retinal disorder characterized by impaired night vision, often associated with nystagmus and myopia.</description>
        <dbReference type="MIM" id="163500"/>
    </disease>
    <text>The disease is caused by variants affecting the gene represented in this entry.</text>
</comment>
<comment type="similarity">
    <text evidence="25">Belongs to the cyclic nucleotide phosphodiesterase family.</text>
</comment>
<gene>
    <name evidence="27" type="primary">PDE6B</name>
    <name type="synonym">PDEB</name>
</gene>